<proteinExistence type="inferred from homology"/>
<dbReference type="EC" id="6.3.1.5" evidence="1"/>
<dbReference type="EMBL" id="CP000036">
    <property type="protein sequence ID" value="ABB65976.1"/>
    <property type="molecule type" value="Genomic_DNA"/>
</dbReference>
<dbReference type="RefSeq" id="WP_000175034.1">
    <property type="nucleotide sequence ID" value="NC_007613.1"/>
</dbReference>
<dbReference type="SMR" id="Q321N2"/>
<dbReference type="KEGG" id="sbo:SBO_1350"/>
<dbReference type="HOGENOM" id="CLU_059327_3_0_6"/>
<dbReference type="UniPathway" id="UPA00253">
    <property type="reaction ID" value="UER00333"/>
</dbReference>
<dbReference type="Proteomes" id="UP000007067">
    <property type="component" value="Chromosome"/>
</dbReference>
<dbReference type="GO" id="GO:0005737">
    <property type="term" value="C:cytoplasm"/>
    <property type="evidence" value="ECO:0007669"/>
    <property type="project" value="InterPro"/>
</dbReference>
<dbReference type="GO" id="GO:0005524">
    <property type="term" value="F:ATP binding"/>
    <property type="evidence" value="ECO:0007669"/>
    <property type="project" value="UniProtKB-UniRule"/>
</dbReference>
<dbReference type="GO" id="GO:0004359">
    <property type="term" value="F:glutaminase activity"/>
    <property type="evidence" value="ECO:0007669"/>
    <property type="project" value="InterPro"/>
</dbReference>
<dbReference type="GO" id="GO:0046872">
    <property type="term" value="F:metal ion binding"/>
    <property type="evidence" value="ECO:0007669"/>
    <property type="project" value="UniProtKB-KW"/>
</dbReference>
<dbReference type="GO" id="GO:0003952">
    <property type="term" value="F:NAD+ synthase (glutamine-hydrolyzing) activity"/>
    <property type="evidence" value="ECO:0007669"/>
    <property type="project" value="InterPro"/>
</dbReference>
<dbReference type="GO" id="GO:0008795">
    <property type="term" value="F:NAD+ synthase activity"/>
    <property type="evidence" value="ECO:0007669"/>
    <property type="project" value="UniProtKB-UniRule"/>
</dbReference>
<dbReference type="GO" id="GO:0009435">
    <property type="term" value="P:NAD biosynthetic process"/>
    <property type="evidence" value="ECO:0007669"/>
    <property type="project" value="UniProtKB-UniRule"/>
</dbReference>
<dbReference type="CDD" id="cd00553">
    <property type="entry name" value="NAD_synthase"/>
    <property type="match status" value="1"/>
</dbReference>
<dbReference type="FunFam" id="3.40.50.620:FF:000015">
    <property type="entry name" value="NH(3)-dependent NAD(+) synthetase"/>
    <property type="match status" value="1"/>
</dbReference>
<dbReference type="Gene3D" id="3.40.50.620">
    <property type="entry name" value="HUPs"/>
    <property type="match status" value="1"/>
</dbReference>
<dbReference type="HAMAP" id="MF_00193">
    <property type="entry name" value="NadE_ammonia_dep"/>
    <property type="match status" value="1"/>
</dbReference>
<dbReference type="InterPro" id="IPR022310">
    <property type="entry name" value="NAD/GMP_synthase"/>
</dbReference>
<dbReference type="InterPro" id="IPR003694">
    <property type="entry name" value="NAD_synthase"/>
</dbReference>
<dbReference type="InterPro" id="IPR022926">
    <property type="entry name" value="NH(3)-dep_NAD(+)_synth"/>
</dbReference>
<dbReference type="InterPro" id="IPR014729">
    <property type="entry name" value="Rossmann-like_a/b/a_fold"/>
</dbReference>
<dbReference type="NCBIfam" id="TIGR00552">
    <property type="entry name" value="nadE"/>
    <property type="match status" value="1"/>
</dbReference>
<dbReference type="NCBIfam" id="NF001979">
    <property type="entry name" value="PRK00768.1"/>
    <property type="match status" value="1"/>
</dbReference>
<dbReference type="PANTHER" id="PTHR23090">
    <property type="entry name" value="NH 3 /GLUTAMINE-DEPENDENT NAD + SYNTHETASE"/>
    <property type="match status" value="1"/>
</dbReference>
<dbReference type="PANTHER" id="PTHR23090:SF7">
    <property type="entry name" value="NH(3)-DEPENDENT NAD(+) SYNTHETASE"/>
    <property type="match status" value="1"/>
</dbReference>
<dbReference type="Pfam" id="PF02540">
    <property type="entry name" value="NAD_synthase"/>
    <property type="match status" value="1"/>
</dbReference>
<dbReference type="SUPFAM" id="SSF52402">
    <property type="entry name" value="Adenine nucleotide alpha hydrolases-like"/>
    <property type="match status" value="1"/>
</dbReference>
<organism>
    <name type="scientific">Shigella boydii serotype 4 (strain Sb227)</name>
    <dbReference type="NCBI Taxonomy" id="300268"/>
    <lineage>
        <taxon>Bacteria</taxon>
        <taxon>Pseudomonadati</taxon>
        <taxon>Pseudomonadota</taxon>
        <taxon>Gammaproteobacteria</taxon>
        <taxon>Enterobacterales</taxon>
        <taxon>Enterobacteriaceae</taxon>
        <taxon>Shigella</taxon>
    </lineage>
</organism>
<feature type="chain" id="PRO_1000077607" description="NH(3)-dependent NAD(+) synthetase">
    <location>
        <begin position="1"/>
        <end position="275"/>
    </location>
</feature>
<feature type="binding site" evidence="1">
    <location>
        <begin position="46"/>
        <end position="53"/>
    </location>
    <ligand>
        <name>ATP</name>
        <dbReference type="ChEBI" id="CHEBI:30616"/>
    </ligand>
</feature>
<feature type="binding site" evidence="1">
    <location>
        <position position="52"/>
    </location>
    <ligand>
        <name>Mg(2+)</name>
        <dbReference type="ChEBI" id="CHEBI:18420"/>
    </ligand>
</feature>
<feature type="binding site" evidence="1">
    <location>
        <position position="140"/>
    </location>
    <ligand>
        <name>deamido-NAD(+)</name>
        <dbReference type="ChEBI" id="CHEBI:58437"/>
    </ligand>
</feature>
<feature type="binding site" evidence="1">
    <location>
        <position position="160"/>
    </location>
    <ligand>
        <name>ATP</name>
        <dbReference type="ChEBI" id="CHEBI:30616"/>
    </ligand>
</feature>
<feature type="binding site" evidence="1">
    <location>
        <position position="165"/>
    </location>
    <ligand>
        <name>Mg(2+)</name>
        <dbReference type="ChEBI" id="CHEBI:18420"/>
    </ligand>
</feature>
<feature type="binding site" evidence="1">
    <location>
        <position position="173"/>
    </location>
    <ligand>
        <name>deamido-NAD(+)</name>
        <dbReference type="ChEBI" id="CHEBI:58437"/>
    </ligand>
</feature>
<feature type="binding site" evidence="1">
    <location>
        <position position="180"/>
    </location>
    <ligand>
        <name>deamido-NAD(+)</name>
        <dbReference type="ChEBI" id="CHEBI:58437"/>
    </ligand>
</feature>
<feature type="binding site" evidence="1">
    <location>
        <position position="189"/>
    </location>
    <ligand>
        <name>ATP</name>
        <dbReference type="ChEBI" id="CHEBI:30616"/>
    </ligand>
</feature>
<feature type="binding site" evidence="1">
    <location>
        <position position="211"/>
    </location>
    <ligand>
        <name>ATP</name>
        <dbReference type="ChEBI" id="CHEBI:30616"/>
    </ligand>
</feature>
<feature type="binding site" evidence="1">
    <location>
        <begin position="260"/>
        <end position="261"/>
    </location>
    <ligand>
        <name>deamido-NAD(+)</name>
        <dbReference type="ChEBI" id="CHEBI:58437"/>
    </ligand>
</feature>
<gene>
    <name evidence="1" type="primary">nadE</name>
    <name type="ordered locus">SBO_1350</name>
</gene>
<name>NADE_SHIBS</name>
<sequence>MTLQQQIIKALGAKPQINAEEEIRRSVDFLKSYLQTYPFIKSLVLGISGGQDSTLAGKLCQMAINELRQETGNESLQFIAVRLPYGVQADEQDCQDAIAFIQPDRVLTVNIKGAVLASEQALREAGIELSDFVRGNEKARERMKAQYSIAGMTSGVVVGTDHAAEAITGFFTKYGDGGTDINPLYRLNKRQGKQLLAALACPEHLYKKAPTADLEDDRPSLPDEVALGVTYDNIDDYLEGKNVPQQVARTIENWYLKTEHKRRPPITVFDDFWKK</sequence>
<reference key="1">
    <citation type="journal article" date="2005" name="Nucleic Acids Res.">
        <title>Genome dynamics and diversity of Shigella species, the etiologic agents of bacillary dysentery.</title>
        <authorList>
            <person name="Yang F."/>
            <person name="Yang J."/>
            <person name="Zhang X."/>
            <person name="Chen L."/>
            <person name="Jiang Y."/>
            <person name="Yan Y."/>
            <person name="Tang X."/>
            <person name="Wang J."/>
            <person name="Xiong Z."/>
            <person name="Dong J."/>
            <person name="Xue Y."/>
            <person name="Zhu Y."/>
            <person name="Xu X."/>
            <person name="Sun L."/>
            <person name="Chen S."/>
            <person name="Nie H."/>
            <person name="Peng J."/>
            <person name="Xu J."/>
            <person name="Wang Y."/>
            <person name="Yuan Z."/>
            <person name="Wen Y."/>
            <person name="Yao Z."/>
            <person name="Shen Y."/>
            <person name="Qiang B."/>
            <person name="Hou Y."/>
            <person name="Yu J."/>
            <person name="Jin Q."/>
        </authorList>
    </citation>
    <scope>NUCLEOTIDE SEQUENCE [LARGE SCALE GENOMIC DNA]</scope>
    <source>
        <strain>Sb227</strain>
    </source>
</reference>
<evidence type="ECO:0000255" key="1">
    <source>
        <dbReference type="HAMAP-Rule" id="MF_00193"/>
    </source>
</evidence>
<protein>
    <recommendedName>
        <fullName evidence="1">NH(3)-dependent NAD(+) synthetase</fullName>
        <ecNumber evidence="1">6.3.1.5</ecNumber>
    </recommendedName>
</protein>
<keyword id="KW-0067">ATP-binding</keyword>
<keyword id="KW-0436">Ligase</keyword>
<keyword id="KW-0460">Magnesium</keyword>
<keyword id="KW-0479">Metal-binding</keyword>
<keyword id="KW-0520">NAD</keyword>
<keyword id="KW-0547">Nucleotide-binding</keyword>
<comment type="function">
    <text evidence="1">Catalyzes the ATP-dependent amidation of deamido-NAD to form NAD. Uses ammonia as a nitrogen source.</text>
</comment>
<comment type="catalytic activity">
    <reaction evidence="1">
        <text>deamido-NAD(+) + NH4(+) + ATP = AMP + diphosphate + NAD(+) + H(+)</text>
        <dbReference type="Rhea" id="RHEA:21188"/>
        <dbReference type="ChEBI" id="CHEBI:15378"/>
        <dbReference type="ChEBI" id="CHEBI:28938"/>
        <dbReference type="ChEBI" id="CHEBI:30616"/>
        <dbReference type="ChEBI" id="CHEBI:33019"/>
        <dbReference type="ChEBI" id="CHEBI:57540"/>
        <dbReference type="ChEBI" id="CHEBI:58437"/>
        <dbReference type="ChEBI" id="CHEBI:456215"/>
        <dbReference type="EC" id="6.3.1.5"/>
    </reaction>
</comment>
<comment type="pathway">
    <text evidence="1">Cofactor biosynthesis; NAD(+) biosynthesis; NAD(+) from deamido-NAD(+) (ammonia route): step 1/1.</text>
</comment>
<comment type="subunit">
    <text evidence="1">Homodimer.</text>
</comment>
<comment type="similarity">
    <text evidence="1">Belongs to the NAD synthetase family.</text>
</comment>
<accession>Q321N2</accession>